<evidence type="ECO:0000255" key="1">
    <source>
        <dbReference type="HAMAP-Rule" id="MF_01662"/>
    </source>
</evidence>
<accession>B0BSB3</accession>
<keyword id="KW-0119">Carbohydrate metabolism</keyword>
<keyword id="KW-0963">Cytoplasm</keyword>
<keyword id="KW-0294">Fucose metabolism</keyword>
<keyword id="KW-0413">Isomerase</keyword>
<dbReference type="EC" id="5.1.3.29" evidence="1"/>
<dbReference type="EMBL" id="CP000687">
    <property type="protein sequence ID" value="ABY70270.1"/>
    <property type="molecule type" value="Genomic_DNA"/>
</dbReference>
<dbReference type="RefSeq" id="WP_005605693.1">
    <property type="nucleotide sequence ID" value="NC_010278.1"/>
</dbReference>
<dbReference type="SMR" id="B0BSB3"/>
<dbReference type="KEGG" id="apj:APJL_1718"/>
<dbReference type="HOGENOM" id="CLU_120075_1_0_6"/>
<dbReference type="UniPathway" id="UPA00956"/>
<dbReference type="Proteomes" id="UP000008547">
    <property type="component" value="Chromosome"/>
</dbReference>
<dbReference type="GO" id="GO:0005737">
    <property type="term" value="C:cytoplasm"/>
    <property type="evidence" value="ECO:0007669"/>
    <property type="project" value="UniProtKB-SubCell"/>
</dbReference>
<dbReference type="GO" id="GO:0042806">
    <property type="term" value="F:fucose binding"/>
    <property type="evidence" value="ECO:0007669"/>
    <property type="project" value="InterPro"/>
</dbReference>
<dbReference type="GO" id="GO:0036373">
    <property type="term" value="F:L-fucose mutarotase activity"/>
    <property type="evidence" value="ECO:0007669"/>
    <property type="project" value="UniProtKB-EC"/>
</dbReference>
<dbReference type="GO" id="GO:0036065">
    <property type="term" value="P:fucosylation"/>
    <property type="evidence" value="ECO:0007669"/>
    <property type="project" value="TreeGrafter"/>
</dbReference>
<dbReference type="GO" id="GO:0042354">
    <property type="term" value="P:L-fucose metabolic process"/>
    <property type="evidence" value="ECO:0007669"/>
    <property type="project" value="UniProtKB-UniRule"/>
</dbReference>
<dbReference type="Gene3D" id="3.40.1650.10">
    <property type="entry name" value="RbsD-like domain"/>
    <property type="match status" value="1"/>
</dbReference>
<dbReference type="HAMAP" id="MF_01662">
    <property type="entry name" value="L_fucose_rotase"/>
    <property type="match status" value="1"/>
</dbReference>
<dbReference type="InterPro" id="IPR023751">
    <property type="entry name" value="L-fucose_mutarotase"/>
</dbReference>
<dbReference type="InterPro" id="IPR023750">
    <property type="entry name" value="RbsD-like_sf"/>
</dbReference>
<dbReference type="InterPro" id="IPR050443">
    <property type="entry name" value="RbsD/FucU_mutarotase"/>
</dbReference>
<dbReference type="InterPro" id="IPR007721">
    <property type="entry name" value="RbsD_FucU"/>
</dbReference>
<dbReference type="NCBIfam" id="NF011949">
    <property type="entry name" value="PRK15420.1"/>
    <property type="match status" value="1"/>
</dbReference>
<dbReference type="PANTHER" id="PTHR31690">
    <property type="entry name" value="FUCOSE MUTAROTASE"/>
    <property type="match status" value="1"/>
</dbReference>
<dbReference type="PANTHER" id="PTHR31690:SF4">
    <property type="entry name" value="FUCOSE MUTAROTASE"/>
    <property type="match status" value="1"/>
</dbReference>
<dbReference type="Pfam" id="PF05025">
    <property type="entry name" value="RbsD_FucU"/>
    <property type="match status" value="1"/>
</dbReference>
<dbReference type="SUPFAM" id="SSF102546">
    <property type="entry name" value="RbsD-like"/>
    <property type="match status" value="1"/>
</dbReference>
<protein>
    <recommendedName>
        <fullName evidence="1">L-fucose mutarotase</fullName>
        <ecNumber evidence="1">5.1.3.29</ecNumber>
    </recommendedName>
    <alternativeName>
        <fullName evidence="1">Fucose 1-epimerase</fullName>
    </alternativeName>
    <alternativeName>
        <fullName evidence="1">Type-2 mutarotase</fullName>
    </alternativeName>
</protein>
<gene>
    <name evidence="1" type="primary">fucU</name>
    <name type="ordered locus">APJL_1718</name>
</gene>
<reference key="1">
    <citation type="journal article" date="2008" name="PLoS ONE">
        <title>Genome biology of Actinobacillus pleuropneumoniae JL03, an isolate of serotype 3 prevalent in China.</title>
        <authorList>
            <person name="Xu Z."/>
            <person name="Zhou Y."/>
            <person name="Li L."/>
            <person name="Zhou R."/>
            <person name="Xiao S."/>
            <person name="Wan Y."/>
            <person name="Zhang S."/>
            <person name="Wang K."/>
            <person name="Li W."/>
            <person name="Li L."/>
            <person name="Jin H."/>
            <person name="Kang M."/>
            <person name="Dalai B."/>
            <person name="Li T."/>
            <person name="Liu L."/>
            <person name="Cheng Y."/>
            <person name="Zhang L."/>
            <person name="Xu T."/>
            <person name="Zheng H."/>
            <person name="Pu S."/>
            <person name="Wang B."/>
            <person name="Gu W."/>
            <person name="Zhang X.L."/>
            <person name="Zhu G.-F."/>
            <person name="Wang S."/>
            <person name="Zhao G.-P."/>
            <person name="Chen H."/>
        </authorList>
    </citation>
    <scope>NUCLEOTIDE SEQUENCE [LARGE SCALE GENOMIC DNA]</scope>
    <source>
        <strain>JL03</strain>
    </source>
</reference>
<proteinExistence type="inferred from homology"/>
<organism>
    <name type="scientific">Actinobacillus pleuropneumoniae serotype 3 (strain JL03)</name>
    <dbReference type="NCBI Taxonomy" id="434271"/>
    <lineage>
        <taxon>Bacteria</taxon>
        <taxon>Pseudomonadati</taxon>
        <taxon>Pseudomonadota</taxon>
        <taxon>Gammaproteobacteria</taxon>
        <taxon>Pasteurellales</taxon>
        <taxon>Pasteurellaceae</taxon>
        <taxon>Actinobacillus</taxon>
    </lineage>
</organism>
<sequence>MLKGIHPAISPELLKVLAEMGHGDELVLSDAHFPAHSIHSKVIRADGIGVATLLEGISALFEFDQYVEAPLAMMQAVPGDTLDPSVEERYLAAIKKVNGSTPKVERVERFAFYDRAKTAYAVVITGELAKYGNIIIKKGVTPVK</sequence>
<comment type="function">
    <text evidence="1">Involved in the anomeric conversion of L-fucose.</text>
</comment>
<comment type="catalytic activity">
    <reaction evidence="1">
        <text>alpha-L-fucose = beta-L-fucose</text>
        <dbReference type="Rhea" id="RHEA:25580"/>
        <dbReference type="ChEBI" id="CHEBI:42548"/>
        <dbReference type="ChEBI" id="CHEBI:42589"/>
        <dbReference type="EC" id="5.1.3.29"/>
    </reaction>
</comment>
<comment type="pathway">
    <text evidence="1">Carbohydrate metabolism; L-fucose metabolism.</text>
</comment>
<comment type="subunit">
    <text evidence="1">Homodecamer.</text>
</comment>
<comment type="subcellular location">
    <subcellularLocation>
        <location evidence="1">Cytoplasm</location>
    </subcellularLocation>
</comment>
<comment type="similarity">
    <text evidence="1">Belongs to the RbsD / FucU family. FucU mutarotase subfamily.</text>
</comment>
<feature type="chain" id="PRO_0000344535" description="L-fucose mutarotase">
    <location>
        <begin position="1"/>
        <end position="144"/>
    </location>
</feature>
<feature type="active site" description="Proton donor" evidence="1">
    <location>
        <position position="22"/>
    </location>
</feature>
<feature type="binding site" evidence="1">
    <location>
        <position position="30"/>
    </location>
    <ligand>
        <name>substrate</name>
    </ligand>
</feature>
<feature type="binding site" evidence="1">
    <location>
        <position position="109"/>
    </location>
    <ligand>
        <name>substrate</name>
    </ligand>
</feature>
<feature type="binding site" evidence="1">
    <location>
        <begin position="131"/>
        <end position="133"/>
    </location>
    <ligand>
        <name>substrate</name>
    </ligand>
</feature>
<name>FUCM_ACTPJ</name>